<evidence type="ECO:0000255" key="1">
    <source>
        <dbReference type="HAMAP-Rule" id="MF_01547"/>
    </source>
</evidence>
<evidence type="ECO:0000256" key="2">
    <source>
        <dbReference type="SAM" id="MobiDB-lite"/>
    </source>
</evidence>
<accession>B2SAY0</accession>
<feature type="chain" id="PRO_1000194977" description="Ribosomal RNA large subunit methyltransferase E">
    <location>
        <begin position="1"/>
        <end position="240"/>
    </location>
</feature>
<feature type="region of interest" description="Disordered" evidence="2">
    <location>
        <begin position="1"/>
        <end position="33"/>
    </location>
</feature>
<feature type="compositionally biased region" description="Gly residues" evidence="2">
    <location>
        <begin position="1"/>
        <end position="20"/>
    </location>
</feature>
<feature type="active site" description="Proton acceptor" evidence="1">
    <location>
        <position position="195"/>
    </location>
</feature>
<feature type="binding site" evidence="1">
    <location>
        <position position="92"/>
    </location>
    <ligand>
        <name>S-adenosyl-L-methionine</name>
        <dbReference type="ChEBI" id="CHEBI:59789"/>
    </ligand>
</feature>
<feature type="binding site" evidence="1">
    <location>
        <position position="94"/>
    </location>
    <ligand>
        <name>S-adenosyl-L-methionine</name>
        <dbReference type="ChEBI" id="CHEBI:59789"/>
    </ligand>
</feature>
<feature type="binding site" evidence="1">
    <location>
        <position position="115"/>
    </location>
    <ligand>
        <name>S-adenosyl-L-methionine</name>
        <dbReference type="ChEBI" id="CHEBI:59789"/>
    </ligand>
</feature>
<feature type="binding site" evidence="1">
    <location>
        <position position="131"/>
    </location>
    <ligand>
        <name>S-adenosyl-L-methionine</name>
        <dbReference type="ChEBI" id="CHEBI:59789"/>
    </ligand>
</feature>
<feature type="binding site" evidence="1">
    <location>
        <position position="155"/>
    </location>
    <ligand>
        <name>S-adenosyl-L-methionine</name>
        <dbReference type="ChEBI" id="CHEBI:59789"/>
    </ligand>
</feature>
<gene>
    <name evidence="1" type="primary">rlmE</name>
    <name evidence="1" type="synonym">ftsJ</name>
    <name evidence="1" type="synonym">rrmJ</name>
    <name type="ordered locus">BAbS19_II05220</name>
</gene>
<protein>
    <recommendedName>
        <fullName evidence="1">Ribosomal RNA large subunit methyltransferase E</fullName>
        <ecNumber evidence="1">2.1.1.166</ecNumber>
    </recommendedName>
    <alternativeName>
        <fullName evidence="1">23S rRNA Um2552 methyltransferase</fullName>
    </alternativeName>
    <alternativeName>
        <fullName evidence="1">rRNA (uridine-2'-O-)-methyltransferase</fullName>
    </alternativeName>
</protein>
<name>RLME_BRUA1</name>
<proteinExistence type="inferred from homology"/>
<keyword id="KW-0963">Cytoplasm</keyword>
<keyword id="KW-0489">Methyltransferase</keyword>
<keyword id="KW-0698">rRNA processing</keyword>
<keyword id="KW-0949">S-adenosyl-L-methionine</keyword>
<keyword id="KW-0808">Transferase</keyword>
<organism>
    <name type="scientific">Brucella abortus (strain S19)</name>
    <dbReference type="NCBI Taxonomy" id="430066"/>
    <lineage>
        <taxon>Bacteria</taxon>
        <taxon>Pseudomonadati</taxon>
        <taxon>Pseudomonadota</taxon>
        <taxon>Alphaproteobacteria</taxon>
        <taxon>Hyphomicrobiales</taxon>
        <taxon>Brucellaceae</taxon>
        <taxon>Brucella/Ochrobactrum group</taxon>
        <taxon>Brucella</taxon>
    </lineage>
</organism>
<sequence length="240" mass="26308">MSKAGGNKGGSRTGGRGGAGSSNLHVRVKKKAGTIKESSRRWLERHLNDPYVHKSRQDGYRSRAAYKLIEINDRYNLLKKGQKIIDLGAAPGGWSQIAARIVGSTDENPQVVGIDYLHVDPLPGVILLEMDFLDDEAPQKLMDALGDKPDLVISDMAAPTTGHRRTDHLRTVHLCEVAADFAVSVLKPGGHFLTKTFQGGTENELLALLKQKFRSVHHVKPPASRAESVELYLLARDFKG</sequence>
<dbReference type="EC" id="2.1.1.166" evidence="1"/>
<dbReference type="EMBL" id="CP000888">
    <property type="protein sequence ID" value="ACD74017.1"/>
    <property type="molecule type" value="Genomic_DNA"/>
</dbReference>
<dbReference type="RefSeq" id="WP_002965955.1">
    <property type="nucleotide sequence ID" value="NC_010740.1"/>
</dbReference>
<dbReference type="SMR" id="B2SAY0"/>
<dbReference type="KEGG" id="bmc:BAbS19_II05220"/>
<dbReference type="HOGENOM" id="CLU_009422_4_0_5"/>
<dbReference type="Proteomes" id="UP000002565">
    <property type="component" value="Chromosome 2"/>
</dbReference>
<dbReference type="GO" id="GO:0005737">
    <property type="term" value="C:cytoplasm"/>
    <property type="evidence" value="ECO:0007669"/>
    <property type="project" value="UniProtKB-SubCell"/>
</dbReference>
<dbReference type="GO" id="GO:0008650">
    <property type="term" value="F:rRNA (uridine-2'-O-)-methyltransferase activity"/>
    <property type="evidence" value="ECO:0007669"/>
    <property type="project" value="UniProtKB-UniRule"/>
</dbReference>
<dbReference type="Gene3D" id="3.40.50.150">
    <property type="entry name" value="Vaccinia Virus protein VP39"/>
    <property type="match status" value="1"/>
</dbReference>
<dbReference type="HAMAP" id="MF_01547">
    <property type="entry name" value="RNA_methyltr_E"/>
    <property type="match status" value="1"/>
</dbReference>
<dbReference type="InterPro" id="IPR050082">
    <property type="entry name" value="RNA_methyltr_RlmE"/>
</dbReference>
<dbReference type="InterPro" id="IPR002877">
    <property type="entry name" value="RNA_MeTrfase_FtsJ_dom"/>
</dbReference>
<dbReference type="InterPro" id="IPR015507">
    <property type="entry name" value="rRNA-MeTfrase_E"/>
</dbReference>
<dbReference type="InterPro" id="IPR029063">
    <property type="entry name" value="SAM-dependent_MTases_sf"/>
</dbReference>
<dbReference type="PANTHER" id="PTHR10920">
    <property type="entry name" value="RIBOSOMAL RNA METHYLTRANSFERASE"/>
    <property type="match status" value="1"/>
</dbReference>
<dbReference type="PANTHER" id="PTHR10920:SF18">
    <property type="entry name" value="RRNA METHYLTRANSFERASE 2, MITOCHONDRIAL"/>
    <property type="match status" value="1"/>
</dbReference>
<dbReference type="Pfam" id="PF01728">
    <property type="entry name" value="FtsJ"/>
    <property type="match status" value="1"/>
</dbReference>
<dbReference type="PIRSF" id="PIRSF005461">
    <property type="entry name" value="23S_rRNA_mtase"/>
    <property type="match status" value="1"/>
</dbReference>
<dbReference type="SUPFAM" id="SSF53335">
    <property type="entry name" value="S-adenosyl-L-methionine-dependent methyltransferases"/>
    <property type="match status" value="1"/>
</dbReference>
<comment type="function">
    <text evidence="1">Specifically methylates the uridine in position 2552 of 23S rRNA at the 2'-O position of the ribose in the fully assembled 50S ribosomal subunit.</text>
</comment>
<comment type="catalytic activity">
    <reaction evidence="1">
        <text>uridine(2552) in 23S rRNA + S-adenosyl-L-methionine = 2'-O-methyluridine(2552) in 23S rRNA + S-adenosyl-L-homocysteine + H(+)</text>
        <dbReference type="Rhea" id="RHEA:42720"/>
        <dbReference type="Rhea" id="RHEA-COMP:10202"/>
        <dbReference type="Rhea" id="RHEA-COMP:10203"/>
        <dbReference type="ChEBI" id="CHEBI:15378"/>
        <dbReference type="ChEBI" id="CHEBI:57856"/>
        <dbReference type="ChEBI" id="CHEBI:59789"/>
        <dbReference type="ChEBI" id="CHEBI:65315"/>
        <dbReference type="ChEBI" id="CHEBI:74478"/>
        <dbReference type="EC" id="2.1.1.166"/>
    </reaction>
</comment>
<comment type="subcellular location">
    <subcellularLocation>
        <location evidence="1">Cytoplasm</location>
    </subcellularLocation>
</comment>
<comment type="similarity">
    <text evidence="1">Belongs to the class I-like SAM-binding methyltransferase superfamily. RNA methyltransferase RlmE family.</text>
</comment>
<reference key="1">
    <citation type="journal article" date="2008" name="PLoS ONE">
        <title>Genome sequence of Brucella abortus vaccine strain S19 compared to virulent strains yields candidate virulence genes.</title>
        <authorList>
            <person name="Crasta O.R."/>
            <person name="Folkerts O."/>
            <person name="Fei Z."/>
            <person name="Mane S.P."/>
            <person name="Evans C."/>
            <person name="Martino-Catt S."/>
            <person name="Bricker B."/>
            <person name="Yu G."/>
            <person name="Du L."/>
            <person name="Sobral B.W."/>
        </authorList>
    </citation>
    <scope>NUCLEOTIDE SEQUENCE [LARGE SCALE GENOMIC DNA]</scope>
    <source>
        <strain>S19</strain>
    </source>
</reference>